<comment type="function">
    <text evidence="1">One of the primary rRNA binding proteins, it binds directly to 16S rRNA where it helps nucleate assembly of the platform of the 30S subunit by binding and bridging several RNA helices of the 16S rRNA.</text>
</comment>
<comment type="function">
    <text evidence="1">Forms an intersubunit bridge (bridge B4) with the 23S rRNA of the 50S subunit in the ribosome.</text>
</comment>
<comment type="subunit">
    <text evidence="1">Part of the 30S ribosomal subunit. Forms a bridge to the 50S subunit in the 70S ribosome, contacting the 23S rRNA.</text>
</comment>
<comment type="similarity">
    <text evidence="1">Belongs to the universal ribosomal protein uS15 family.</text>
</comment>
<name>RS15_PSYCK</name>
<protein>
    <recommendedName>
        <fullName evidence="1">Small ribosomal subunit protein uS15</fullName>
    </recommendedName>
    <alternativeName>
        <fullName evidence="2">30S ribosomal protein S15</fullName>
    </alternativeName>
</protein>
<proteinExistence type="inferred from homology"/>
<organism>
    <name type="scientific">Psychrobacter cryohalolentis (strain ATCC BAA-1226 / DSM 17306 / VKM B-2378 / K5)</name>
    <dbReference type="NCBI Taxonomy" id="335284"/>
    <lineage>
        <taxon>Bacteria</taxon>
        <taxon>Pseudomonadati</taxon>
        <taxon>Pseudomonadota</taxon>
        <taxon>Gammaproteobacteria</taxon>
        <taxon>Moraxellales</taxon>
        <taxon>Moraxellaceae</taxon>
        <taxon>Psychrobacter</taxon>
    </lineage>
</organism>
<sequence>MLTNADREQIIAQYQRGESDTGSPEVQVALLSARINDLQNHFKAHKADHHSRRGLIRMVNTRRKLLDYLKGKDLGRYTTLISQLGLRR</sequence>
<keyword id="KW-0687">Ribonucleoprotein</keyword>
<keyword id="KW-0689">Ribosomal protein</keyword>
<keyword id="KW-0694">RNA-binding</keyword>
<keyword id="KW-0699">rRNA-binding</keyword>
<feature type="chain" id="PRO_0000255516" description="Small ribosomal subunit protein uS15">
    <location>
        <begin position="1"/>
        <end position="88"/>
    </location>
</feature>
<reference key="1">
    <citation type="submission" date="2006-03" db="EMBL/GenBank/DDBJ databases">
        <title>Complete sequence of chromosome of Psychrobacter cryohalolentis K5.</title>
        <authorList>
            <consortium name="US DOE Joint Genome Institute"/>
            <person name="Copeland A."/>
            <person name="Lucas S."/>
            <person name="Lapidus A."/>
            <person name="Barry K."/>
            <person name="Detter J.C."/>
            <person name="Glavina T."/>
            <person name="Hammon N."/>
            <person name="Israni S."/>
            <person name="Dalin E."/>
            <person name="Tice H."/>
            <person name="Pitluck S."/>
            <person name="Brettin T."/>
            <person name="Bruce D."/>
            <person name="Han C."/>
            <person name="Tapia R."/>
            <person name="Sims D.R."/>
            <person name="Gilna P."/>
            <person name="Schmutz J."/>
            <person name="Larimer F."/>
            <person name="Land M."/>
            <person name="Hauser L."/>
            <person name="Kyrpides N."/>
            <person name="Kim E."/>
            <person name="Richardson P."/>
        </authorList>
    </citation>
    <scope>NUCLEOTIDE SEQUENCE [LARGE SCALE GENOMIC DNA]</scope>
    <source>
        <strain>ATCC BAA-1226 / DSM 17306 / VKM B-2378 / K5</strain>
    </source>
</reference>
<gene>
    <name evidence="1" type="primary">rpsO</name>
    <name type="ordered locus">Pcryo_0079</name>
</gene>
<dbReference type="EMBL" id="CP000323">
    <property type="protein sequence ID" value="ABE73863.1"/>
    <property type="molecule type" value="Genomic_DNA"/>
</dbReference>
<dbReference type="RefSeq" id="WP_011512454.1">
    <property type="nucleotide sequence ID" value="NC_007969.1"/>
</dbReference>
<dbReference type="SMR" id="Q1QEP0"/>
<dbReference type="STRING" id="335284.Pcryo_0079"/>
<dbReference type="KEGG" id="pcr:Pcryo_0079"/>
<dbReference type="eggNOG" id="COG0184">
    <property type="taxonomic scope" value="Bacteria"/>
</dbReference>
<dbReference type="HOGENOM" id="CLU_148518_0_0_6"/>
<dbReference type="Proteomes" id="UP000002425">
    <property type="component" value="Chromosome"/>
</dbReference>
<dbReference type="GO" id="GO:0022627">
    <property type="term" value="C:cytosolic small ribosomal subunit"/>
    <property type="evidence" value="ECO:0007669"/>
    <property type="project" value="TreeGrafter"/>
</dbReference>
<dbReference type="GO" id="GO:0019843">
    <property type="term" value="F:rRNA binding"/>
    <property type="evidence" value="ECO:0007669"/>
    <property type="project" value="UniProtKB-UniRule"/>
</dbReference>
<dbReference type="GO" id="GO:0003735">
    <property type="term" value="F:structural constituent of ribosome"/>
    <property type="evidence" value="ECO:0007669"/>
    <property type="project" value="InterPro"/>
</dbReference>
<dbReference type="GO" id="GO:0006412">
    <property type="term" value="P:translation"/>
    <property type="evidence" value="ECO:0007669"/>
    <property type="project" value="UniProtKB-UniRule"/>
</dbReference>
<dbReference type="CDD" id="cd00353">
    <property type="entry name" value="Ribosomal_S15p_S13e"/>
    <property type="match status" value="1"/>
</dbReference>
<dbReference type="FunFam" id="1.10.287.10:FF:000002">
    <property type="entry name" value="30S ribosomal protein S15"/>
    <property type="match status" value="1"/>
</dbReference>
<dbReference type="Gene3D" id="6.10.250.3130">
    <property type="match status" value="1"/>
</dbReference>
<dbReference type="Gene3D" id="1.10.287.10">
    <property type="entry name" value="S15/NS1, RNA-binding"/>
    <property type="match status" value="1"/>
</dbReference>
<dbReference type="HAMAP" id="MF_01343_B">
    <property type="entry name" value="Ribosomal_uS15_B"/>
    <property type="match status" value="1"/>
</dbReference>
<dbReference type="InterPro" id="IPR000589">
    <property type="entry name" value="Ribosomal_uS15"/>
</dbReference>
<dbReference type="InterPro" id="IPR005290">
    <property type="entry name" value="Ribosomal_uS15_bac-type"/>
</dbReference>
<dbReference type="InterPro" id="IPR009068">
    <property type="entry name" value="uS15_NS1_RNA-bd_sf"/>
</dbReference>
<dbReference type="NCBIfam" id="TIGR00952">
    <property type="entry name" value="S15_bact"/>
    <property type="match status" value="1"/>
</dbReference>
<dbReference type="PANTHER" id="PTHR23321">
    <property type="entry name" value="RIBOSOMAL PROTEIN S15, BACTERIAL AND ORGANELLAR"/>
    <property type="match status" value="1"/>
</dbReference>
<dbReference type="PANTHER" id="PTHR23321:SF26">
    <property type="entry name" value="SMALL RIBOSOMAL SUBUNIT PROTEIN US15M"/>
    <property type="match status" value="1"/>
</dbReference>
<dbReference type="Pfam" id="PF00312">
    <property type="entry name" value="Ribosomal_S15"/>
    <property type="match status" value="1"/>
</dbReference>
<dbReference type="SMART" id="SM01387">
    <property type="entry name" value="Ribosomal_S15"/>
    <property type="match status" value="1"/>
</dbReference>
<dbReference type="SUPFAM" id="SSF47060">
    <property type="entry name" value="S15/NS1 RNA-binding domain"/>
    <property type="match status" value="1"/>
</dbReference>
<dbReference type="PROSITE" id="PS00362">
    <property type="entry name" value="RIBOSOMAL_S15"/>
    <property type="match status" value="1"/>
</dbReference>
<evidence type="ECO:0000255" key="1">
    <source>
        <dbReference type="HAMAP-Rule" id="MF_01343"/>
    </source>
</evidence>
<evidence type="ECO:0000305" key="2"/>
<accession>Q1QEP0</accession>